<proteinExistence type="inferred from homology"/>
<feature type="chain" id="PRO_1000200405" description="DNA gyrase inhibitor YacG">
    <location>
        <begin position="1"/>
        <end position="65"/>
    </location>
</feature>
<feature type="region of interest" description="Disordered" evidence="2">
    <location>
        <begin position="45"/>
        <end position="65"/>
    </location>
</feature>
<feature type="compositionally biased region" description="Acidic residues" evidence="2">
    <location>
        <begin position="54"/>
        <end position="65"/>
    </location>
</feature>
<feature type="binding site" evidence="1">
    <location>
        <position position="9"/>
    </location>
    <ligand>
        <name>Zn(2+)</name>
        <dbReference type="ChEBI" id="CHEBI:29105"/>
    </ligand>
</feature>
<feature type="binding site" evidence="1">
    <location>
        <position position="12"/>
    </location>
    <ligand>
        <name>Zn(2+)</name>
        <dbReference type="ChEBI" id="CHEBI:29105"/>
    </ligand>
</feature>
<feature type="binding site" evidence="1">
    <location>
        <position position="28"/>
    </location>
    <ligand>
        <name>Zn(2+)</name>
        <dbReference type="ChEBI" id="CHEBI:29105"/>
    </ligand>
</feature>
<feature type="binding site" evidence="1">
    <location>
        <position position="32"/>
    </location>
    <ligand>
        <name>Zn(2+)</name>
        <dbReference type="ChEBI" id="CHEBI:29105"/>
    </ligand>
</feature>
<protein>
    <recommendedName>
        <fullName evidence="1">DNA gyrase inhibitor YacG</fullName>
    </recommendedName>
</protein>
<name>YACG_ECO27</name>
<gene>
    <name evidence="1" type="primary">yacG</name>
    <name type="ordered locus">E2348C_0105</name>
</gene>
<reference key="1">
    <citation type="journal article" date="2009" name="J. Bacteriol.">
        <title>Complete genome sequence and comparative genome analysis of enteropathogenic Escherichia coli O127:H6 strain E2348/69.</title>
        <authorList>
            <person name="Iguchi A."/>
            <person name="Thomson N.R."/>
            <person name="Ogura Y."/>
            <person name="Saunders D."/>
            <person name="Ooka T."/>
            <person name="Henderson I.R."/>
            <person name="Harris D."/>
            <person name="Asadulghani M."/>
            <person name="Kurokawa K."/>
            <person name="Dean P."/>
            <person name="Kenny B."/>
            <person name="Quail M.A."/>
            <person name="Thurston S."/>
            <person name="Dougan G."/>
            <person name="Hayashi T."/>
            <person name="Parkhill J."/>
            <person name="Frankel G."/>
        </authorList>
    </citation>
    <scope>NUCLEOTIDE SEQUENCE [LARGE SCALE GENOMIC DNA]</scope>
    <source>
        <strain>E2348/69 / EPEC</strain>
    </source>
</reference>
<sequence length="65" mass="7306">MSETITVNCPTCGKTVVWGEISPFRPFCSKRCQLIDLGEWAAEEKRIPSSGDLSESDDWSEEPKQ</sequence>
<dbReference type="EMBL" id="FM180568">
    <property type="protein sequence ID" value="CAS07653.1"/>
    <property type="molecule type" value="Genomic_DNA"/>
</dbReference>
<dbReference type="RefSeq" id="WP_000005042.1">
    <property type="nucleotide sequence ID" value="NC_011601.1"/>
</dbReference>
<dbReference type="SMR" id="B7UIF0"/>
<dbReference type="GeneID" id="93777334"/>
<dbReference type="KEGG" id="ecg:E2348C_0105"/>
<dbReference type="HOGENOM" id="CLU_178280_3_1_6"/>
<dbReference type="Proteomes" id="UP000008205">
    <property type="component" value="Chromosome"/>
</dbReference>
<dbReference type="GO" id="GO:0008657">
    <property type="term" value="F:DNA topoisomerase type II (double strand cut, ATP-hydrolyzing) inhibitor activity"/>
    <property type="evidence" value="ECO:0007669"/>
    <property type="project" value="UniProtKB-UniRule"/>
</dbReference>
<dbReference type="GO" id="GO:0008270">
    <property type="term" value="F:zinc ion binding"/>
    <property type="evidence" value="ECO:0007669"/>
    <property type="project" value="UniProtKB-UniRule"/>
</dbReference>
<dbReference type="GO" id="GO:0006355">
    <property type="term" value="P:regulation of DNA-templated transcription"/>
    <property type="evidence" value="ECO:0007669"/>
    <property type="project" value="InterPro"/>
</dbReference>
<dbReference type="FunFam" id="3.30.50.10:FF:000026">
    <property type="entry name" value="DNA gyrase inhibitor YacG"/>
    <property type="match status" value="1"/>
</dbReference>
<dbReference type="Gene3D" id="3.30.50.10">
    <property type="entry name" value="Erythroid Transcription Factor GATA-1, subunit A"/>
    <property type="match status" value="1"/>
</dbReference>
<dbReference type="HAMAP" id="MF_00649">
    <property type="entry name" value="DNA_gyrase_inhibitor_YacG"/>
    <property type="match status" value="1"/>
</dbReference>
<dbReference type="InterPro" id="IPR005584">
    <property type="entry name" value="DNA_gyrase_inhibitor_YacG"/>
</dbReference>
<dbReference type="InterPro" id="IPR013088">
    <property type="entry name" value="Znf_NHR/GATA"/>
</dbReference>
<dbReference type="NCBIfam" id="NF001638">
    <property type="entry name" value="PRK00418.1"/>
    <property type="match status" value="1"/>
</dbReference>
<dbReference type="PANTHER" id="PTHR36150">
    <property type="entry name" value="DNA GYRASE INHIBITOR YACG"/>
    <property type="match status" value="1"/>
</dbReference>
<dbReference type="PANTHER" id="PTHR36150:SF1">
    <property type="entry name" value="DNA GYRASE INHIBITOR YACG"/>
    <property type="match status" value="1"/>
</dbReference>
<dbReference type="Pfam" id="PF03884">
    <property type="entry name" value="YacG"/>
    <property type="match status" value="1"/>
</dbReference>
<dbReference type="SUPFAM" id="SSF57716">
    <property type="entry name" value="Glucocorticoid receptor-like (DNA-binding domain)"/>
    <property type="match status" value="1"/>
</dbReference>
<organism>
    <name type="scientific">Escherichia coli O127:H6 (strain E2348/69 / EPEC)</name>
    <dbReference type="NCBI Taxonomy" id="574521"/>
    <lineage>
        <taxon>Bacteria</taxon>
        <taxon>Pseudomonadati</taxon>
        <taxon>Pseudomonadota</taxon>
        <taxon>Gammaproteobacteria</taxon>
        <taxon>Enterobacterales</taxon>
        <taxon>Enterobacteriaceae</taxon>
        <taxon>Escherichia</taxon>
    </lineage>
</organism>
<accession>B7UIF0</accession>
<comment type="function">
    <text evidence="1">Inhibits all the catalytic activities of DNA gyrase by preventing its interaction with DNA. Acts by binding directly to the C-terminal domain of GyrB, which probably disrupts DNA binding by the gyrase.</text>
</comment>
<comment type="cofactor">
    <cofactor evidence="1">
        <name>Zn(2+)</name>
        <dbReference type="ChEBI" id="CHEBI:29105"/>
    </cofactor>
    <text evidence="1">Binds 1 zinc ion.</text>
</comment>
<comment type="subunit">
    <text evidence="1">Interacts with GyrB.</text>
</comment>
<comment type="similarity">
    <text evidence="1">Belongs to the DNA gyrase inhibitor YacG family.</text>
</comment>
<evidence type="ECO:0000255" key="1">
    <source>
        <dbReference type="HAMAP-Rule" id="MF_00649"/>
    </source>
</evidence>
<evidence type="ECO:0000256" key="2">
    <source>
        <dbReference type="SAM" id="MobiDB-lite"/>
    </source>
</evidence>
<keyword id="KW-0479">Metal-binding</keyword>
<keyword id="KW-1185">Reference proteome</keyword>
<keyword id="KW-0862">Zinc</keyword>